<proteinExistence type="evidence at protein level"/>
<feature type="chain" id="PRO_0000149228" description="Sliding clamp">
    <location>
        <begin position="1"/>
        <end position="228"/>
    </location>
</feature>
<feature type="helix" evidence="2">
    <location>
        <begin position="5"/>
        <end position="15"/>
    </location>
</feature>
<feature type="strand" evidence="2">
    <location>
        <begin position="21"/>
        <end position="23"/>
    </location>
</feature>
<feature type="strand" evidence="2">
    <location>
        <begin position="25"/>
        <end position="32"/>
    </location>
</feature>
<feature type="strand" evidence="2">
    <location>
        <begin position="36"/>
        <end position="48"/>
    </location>
</feature>
<feature type="strand" evidence="2">
    <location>
        <begin position="52"/>
        <end position="55"/>
    </location>
</feature>
<feature type="helix" evidence="2">
    <location>
        <begin position="57"/>
        <end position="64"/>
    </location>
</feature>
<feature type="strand" evidence="2">
    <location>
        <begin position="72"/>
        <end position="75"/>
    </location>
</feature>
<feature type="strand" evidence="2">
    <location>
        <begin position="79"/>
        <end position="84"/>
    </location>
</feature>
<feature type="strand" evidence="2">
    <location>
        <begin position="86"/>
        <end position="92"/>
    </location>
</feature>
<feature type="helix" evidence="2">
    <location>
        <begin position="97"/>
        <end position="99"/>
    </location>
</feature>
<feature type="strand" evidence="2">
    <location>
        <begin position="113"/>
        <end position="118"/>
    </location>
</feature>
<feature type="helix" evidence="2">
    <location>
        <begin position="120"/>
        <end position="132"/>
    </location>
</feature>
<feature type="strand" evidence="2">
    <location>
        <begin position="137"/>
        <end position="143"/>
    </location>
</feature>
<feature type="strand" evidence="2">
    <location>
        <begin position="146"/>
        <end position="152"/>
    </location>
</feature>
<feature type="turn" evidence="2">
    <location>
        <begin position="154"/>
        <end position="156"/>
    </location>
</feature>
<feature type="strand" evidence="2">
    <location>
        <begin position="164"/>
        <end position="171"/>
    </location>
</feature>
<feature type="strand" evidence="2">
    <location>
        <begin position="178"/>
        <end position="183"/>
    </location>
</feature>
<feature type="helix" evidence="2">
    <location>
        <begin position="184"/>
        <end position="186"/>
    </location>
</feature>
<feature type="strand" evidence="2">
    <location>
        <begin position="194"/>
        <end position="201"/>
    </location>
</feature>
<feature type="strand" evidence="2">
    <location>
        <begin position="204"/>
        <end position="210"/>
    </location>
</feature>
<feature type="strand" evidence="2">
    <location>
        <begin position="215"/>
        <end position="219"/>
    </location>
</feature>
<organismHost>
    <name type="scientific">Escherichia coli</name>
    <dbReference type="NCBI Taxonomy" id="562"/>
</organismHost>
<name>CLAMP_BPR69</name>
<dbReference type="EMBL" id="AF039565">
    <property type="protein sequence ID" value="AAC39310.1"/>
    <property type="molecule type" value="Genomic_DNA"/>
</dbReference>
<dbReference type="EMBL" id="AY303349">
    <property type="protein sequence ID" value="AAP75962.1"/>
    <property type="molecule type" value="Genomic_DNA"/>
</dbReference>
<dbReference type="RefSeq" id="NP_861750.1">
    <property type="nucleotide sequence ID" value="NC_004928.1"/>
</dbReference>
<dbReference type="PDB" id="1B77">
    <property type="method" value="X-ray"/>
    <property type="resolution" value="2.10 A"/>
    <property type="chains" value="A/B/C=1-228"/>
</dbReference>
<dbReference type="PDB" id="1B8H">
    <property type="method" value="X-ray"/>
    <property type="resolution" value="3.00 A"/>
    <property type="chains" value="A/B/C=1-228"/>
</dbReference>
<dbReference type="PDBsum" id="1B77"/>
<dbReference type="PDBsum" id="1B8H"/>
<dbReference type="SMR" id="O80164"/>
<dbReference type="GeneID" id="1494176"/>
<dbReference type="KEGG" id="vg:1494176"/>
<dbReference type="OrthoDB" id="7567at10239"/>
<dbReference type="EvolutionaryTrace" id="O80164"/>
<dbReference type="Proteomes" id="UP000000876">
    <property type="component" value="Genome"/>
</dbReference>
<dbReference type="GO" id="GO:0030337">
    <property type="term" value="F:DNA polymerase processivity factor activity"/>
    <property type="evidence" value="ECO:0007669"/>
    <property type="project" value="UniProtKB-UniRule"/>
</dbReference>
<dbReference type="GO" id="GO:0006260">
    <property type="term" value="P:DNA replication"/>
    <property type="evidence" value="ECO:0007669"/>
    <property type="project" value="UniProtKB-KW"/>
</dbReference>
<dbReference type="GO" id="GO:0039693">
    <property type="term" value="P:viral DNA genome replication"/>
    <property type="evidence" value="ECO:0007669"/>
    <property type="project" value="UniProtKB-UniRule"/>
</dbReference>
<dbReference type="GO" id="GO:0019083">
    <property type="term" value="P:viral transcription"/>
    <property type="evidence" value="ECO:0007669"/>
    <property type="project" value="UniProtKB-UniRule"/>
</dbReference>
<dbReference type="Gene3D" id="3.70.10.10">
    <property type="match status" value="1"/>
</dbReference>
<dbReference type="HAMAP" id="MF_04161">
    <property type="entry name" value="Sliding_clamp_T4"/>
    <property type="match status" value="1"/>
</dbReference>
<dbReference type="InterPro" id="IPR046938">
    <property type="entry name" value="DNA_clamp_sf"/>
</dbReference>
<dbReference type="InterPro" id="IPR004190">
    <property type="entry name" value="DNA_pol_proc_fac"/>
</dbReference>
<dbReference type="InterPro" id="IPR015200">
    <property type="entry name" value="Sliding_clamp_C"/>
</dbReference>
<dbReference type="InterPro" id="IPR046389">
    <property type="entry name" value="Sliding_clamp_T4"/>
</dbReference>
<dbReference type="Pfam" id="PF02916">
    <property type="entry name" value="DNA_PPF"/>
    <property type="match status" value="1"/>
</dbReference>
<dbReference type="Pfam" id="PF09116">
    <property type="entry name" value="gp45-slide_C"/>
    <property type="match status" value="1"/>
</dbReference>
<dbReference type="SUPFAM" id="SSF55979">
    <property type="entry name" value="DNA clamp"/>
    <property type="match status" value="2"/>
</dbReference>
<organism>
    <name type="scientific">Escherichia phage RB69</name>
    <name type="common">Bacteriophage RB69</name>
    <dbReference type="NCBI Taxonomy" id="12353"/>
    <lineage>
        <taxon>Viruses</taxon>
        <taxon>Duplodnaviria</taxon>
        <taxon>Heunggongvirae</taxon>
        <taxon>Uroviricota</taxon>
        <taxon>Caudoviricetes</taxon>
        <taxon>Straboviridae</taxon>
        <taxon>Tevenvirinae</taxon>
        <taxon>Mosigvirus</taxon>
        <taxon>Mosigvirus RB69</taxon>
    </lineage>
</organism>
<accession>O80164</accession>
<accession>Q76XX6</accession>
<protein>
    <recommendedName>
        <fullName evidence="1">Sliding clamp</fullName>
    </recommendedName>
    <alternativeName>
        <fullName evidence="1">DNA polymerase accessory protein Gp45</fullName>
    </alternativeName>
    <alternativeName>
        <fullName evidence="1">DNA polymerase clamp</fullName>
    </alternativeName>
    <alternativeName>
        <fullName>Gene product 45</fullName>
        <shortName>gp45</shortName>
    </alternativeName>
</protein>
<keyword id="KW-0002">3D-structure</keyword>
<keyword id="KW-0235">DNA replication</keyword>
<keyword id="KW-1185">Reference proteome</keyword>
<keyword id="KW-1194">Viral DNA replication</keyword>
<keyword id="KW-1195">Viral transcription</keyword>
<reference key="1">
    <citation type="journal article" date="1998" name="J. Bacteriol.">
        <title>Divergence of a DNA replication gene cluster in the T4-related bacteriophage RB69.</title>
        <authorList>
            <person name="Yeh L.-S."/>
            <person name="Hsu T."/>
            <person name="Karam J.D."/>
        </authorList>
    </citation>
    <scope>NUCLEOTIDE SEQUENCE [GENOMIC DNA]</scope>
</reference>
<reference key="2">
    <citation type="submission" date="2003-05" db="EMBL/GenBank/DDBJ databases">
        <title>Enterobacteria phage RB69 complete genome.</title>
        <authorList>
            <person name="Petrov V."/>
            <person name="Nolan J."/>
            <person name="Chin D."/>
            <person name="Letarov A."/>
            <person name="Krisch H.M."/>
            <person name="Karam J.D."/>
        </authorList>
    </citation>
    <scope>NUCLEOTIDE SEQUENCE [LARGE SCALE GENOMIC DNA]</scope>
</reference>
<reference key="3">
    <citation type="journal article" date="1999" name="Cell">
        <title>Building a replisome from interacting pieces: sliding clamp complexed to a peptide from DNA polymerase and a polymerase editing complex.</title>
        <authorList>
            <person name="Shamoo Y."/>
            <person name="Steitz T.A."/>
        </authorList>
    </citation>
    <scope>X-RAY CRYSTALLOGRAPHY (2.1 ANGSTROMS) OF COMPLEX WITH POLYMERASE</scope>
    <scope>FUNCTION</scope>
</reference>
<evidence type="ECO:0000255" key="1">
    <source>
        <dbReference type="HAMAP-Rule" id="MF_04161"/>
    </source>
</evidence>
<evidence type="ECO:0007829" key="2">
    <source>
        <dbReference type="PDB" id="1B77"/>
    </source>
</evidence>
<gene>
    <name type="primary">45</name>
</gene>
<comment type="function">
    <text evidence="1">Sliding clamp that encircles the genomic DNA and links the DNA polymerase to the template to control the processivity of DNA synthesis. Responsible for tethering the catalytic subunit of DNA polymerase to DNA during high-speed replication. Interaction with the sliding-clamp-loader opens the sliding clamp so that it can be loaded around the DNA template. During transcription, encircles the DNA and tethers host RNA polymerase (RNAP) to it.</text>
</comment>
<comment type="subunit">
    <text evidence="1">Homotrimer. Interacts with the viral DNA polymerase; this interaction constitutes the polymerase holoenzyme. Interacts with the sliding-clamp-loader; this interaction allows the sliding-clamp-loader to open the sliding clamp. Interacts with the viral DNA ligase. Part of the replicase complex that includes the DNA polymerase, the polymerase clamp, the clamp loader complex, the single-stranded DNA binding protein, the primase, the helicase and the helicase assembly factor. Interacts with the viral RNA polymerase (RNAP). Part of the transcription activation complex containing host RNAP, the viral RNA polymerase sigma-like factor, the late transcription coactivator, and the sliding clamp.</text>
</comment>
<comment type="similarity">
    <text evidence="1">Belongs to the Tevenvirinae sliding clamp family.</text>
</comment>
<sequence>MKLSKDTIAILKNFASINSGILLSQGKFIMTRAVNGTTYAEANISDEIDFDVALYDLNSFLSILSLVSDDAEISMHTDGNIKIADTRSTVYWPAADKSTIVFPNKPIQFPVASVITEIKAEDLQQLLRVSRGLQIDTIAITNKDGKIVINGYNKVEDSGLTRPKYSLTLTDYDGSNNFNFVINMANMKIQPGNYKVMLWGAGDKVAAKFESSQVSYVIAMEADSTHDF</sequence>